<feature type="chain" id="PRO_1000098310" description="Probable cytosol aminopeptidase">
    <location>
        <begin position="1"/>
        <end position="503"/>
    </location>
</feature>
<feature type="active site" evidence="1">
    <location>
        <position position="286"/>
    </location>
</feature>
<feature type="active site" evidence="1">
    <location>
        <position position="360"/>
    </location>
</feature>
<feature type="binding site" evidence="1">
    <location>
        <position position="274"/>
    </location>
    <ligand>
        <name>Mn(2+)</name>
        <dbReference type="ChEBI" id="CHEBI:29035"/>
        <label>2</label>
    </ligand>
</feature>
<feature type="binding site" evidence="1">
    <location>
        <position position="279"/>
    </location>
    <ligand>
        <name>Mn(2+)</name>
        <dbReference type="ChEBI" id="CHEBI:29035"/>
        <label>1</label>
    </ligand>
</feature>
<feature type="binding site" evidence="1">
    <location>
        <position position="279"/>
    </location>
    <ligand>
        <name>Mn(2+)</name>
        <dbReference type="ChEBI" id="CHEBI:29035"/>
        <label>2</label>
    </ligand>
</feature>
<feature type="binding site" evidence="1">
    <location>
        <position position="297"/>
    </location>
    <ligand>
        <name>Mn(2+)</name>
        <dbReference type="ChEBI" id="CHEBI:29035"/>
        <label>2</label>
    </ligand>
</feature>
<feature type="binding site" evidence="1">
    <location>
        <position position="356"/>
    </location>
    <ligand>
        <name>Mn(2+)</name>
        <dbReference type="ChEBI" id="CHEBI:29035"/>
        <label>1</label>
    </ligand>
</feature>
<feature type="binding site" evidence="1">
    <location>
        <position position="358"/>
    </location>
    <ligand>
        <name>Mn(2+)</name>
        <dbReference type="ChEBI" id="CHEBI:29035"/>
        <label>1</label>
    </ligand>
</feature>
<feature type="binding site" evidence="1">
    <location>
        <position position="358"/>
    </location>
    <ligand>
        <name>Mn(2+)</name>
        <dbReference type="ChEBI" id="CHEBI:29035"/>
        <label>2</label>
    </ligand>
</feature>
<name>AMPA_PARP8</name>
<dbReference type="EC" id="3.4.11.1" evidence="1"/>
<dbReference type="EC" id="3.4.11.10" evidence="1"/>
<dbReference type="EMBL" id="CP001043">
    <property type="protein sequence ID" value="ACC71400.1"/>
    <property type="molecule type" value="Genomic_DNA"/>
</dbReference>
<dbReference type="RefSeq" id="WP_012401606.1">
    <property type="nucleotide sequence ID" value="NC_010622.1"/>
</dbReference>
<dbReference type="SMR" id="B2JET5"/>
<dbReference type="STRING" id="391038.Bphy_2225"/>
<dbReference type="MEROPS" id="M17.003"/>
<dbReference type="KEGG" id="bph:Bphy_2225"/>
<dbReference type="eggNOG" id="COG0260">
    <property type="taxonomic scope" value="Bacteria"/>
</dbReference>
<dbReference type="HOGENOM" id="CLU_013734_2_2_4"/>
<dbReference type="OrthoDB" id="9809354at2"/>
<dbReference type="Proteomes" id="UP000001192">
    <property type="component" value="Chromosome 1"/>
</dbReference>
<dbReference type="GO" id="GO:0005737">
    <property type="term" value="C:cytoplasm"/>
    <property type="evidence" value="ECO:0007669"/>
    <property type="project" value="UniProtKB-SubCell"/>
</dbReference>
<dbReference type="GO" id="GO:0030145">
    <property type="term" value="F:manganese ion binding"/>
    <property type="evidence" value="ECO:0007669"/>
    <property type="project" value="UniProtKB-UniRule"/>
</dbReference>
<dbReference type="GO" id="GO:0070006">
    <property type="term" value="F:metalloaminopeptidase activity"/>
    <property type="evidence" value="ECO:0007669"/>
    <property type="project" value="InterPro"/>
</dbReference>
<dbReference type="GO" id="GO:0006508">
    <property type="term" value="P:proteolysis"/>
    <property type="evidence" value="ECO:0007669"/>
    <property type="project" value="UniProtKB-KW"/>
</dbReference>
<dbReference type="CDD" id="cd00433">
    <property type="entry name" value="Peptidase_M17"/>
    <property type="match status" value="1"/>
</dbReference>
<dbReference type="FunFam" id="3.40.630.10:FF:000004">
    <property type="entry name" value="Probable cytosol aminopeptidase"/>
    <property type="match status" value="1"/>
</dbReference>
<dbReference type="Gene3D" id="3.40.220.10">
    <property type="entry name" value="Leucine Aminopeptidase, subunit E, domain 1"/>
    <property type="match status" value="1"/>
</dbReference>
<dbReference type="Gene3D" id="3.40.630.10">
    <property type="entry name" value="Zn peptidases"/>
    <property type="match status" value="1"/>
</dbReference>
<dbReference type="HAMAP" id="MF_00181">
    <property type="entry name" value="Cytosol_peptidase_M17"/>
    <property type="match status" value="1"/>
</dbReference>
<dbReference type="InterPro" id="IPR011356">
    <property type="entry name" value="Leucine_aapep/pepB"/>
</dbReference>
<dbReference type="InterPro" id="IPR043472">
    <property type="entry name" value="Macro_dom-like"/>
</dbReference>
<dbReference type="InterPro" id="IPR000819">
    <property type="entry name" value="Peptidase_M17_C"/>
</dbReference>
<dbReference type="InterPro" id="IPR023042">
    <property type="entry name" value="Peptidase_M17_leu_NH2_pept"/>
</dbReference>
<dbReference type="InterPro" id="IPR008283">
    <property type="entry name" value="Peptidase_M17_N"/>
</dbReference>
<dbReference type="NCBIfam" id="NF002073">
    <property type="entry name" value="PRK00913.1-2"/>
    <property type="match status" value="1"/>
</dbReference>
<dbReference type="NCBIfam" id="NF002074">
    <property type="entry name" value="PRK00913.1-4"/>
    <property type="match status" value="1"/>
</dbReference>
<dbReference type="NCBIfam" id="NF002077">
    <property type="entry name" value="PRK00913.2-4"/>
    <property type="match status" value="1"/>
</dbReference>
<dbReference type="PANTHER" id="PTHR11963:SF23">
    <property type="entry name" value="CYTOSOL AMINOPEPTIDASE"/>
    <property type="match status" value="1"/>
</dbReference>
<dbReference type="PANTHER" id="PTHR11963">
    <property type="entry name" value="LEUCINE AMINOPEPTIDASE-RELATED"/>
    <property type="match status" value="1"/>
</dbReference>
<dbReference type="Pfam" id="PF00883">
    <property type="entry name" value="Peptidase_M17"/>
    <property type="match status" value="1"/>
</dbReference>
<dbReference type="Pfam" id="PF02789">
    <property type="entry name" value="Peptidase_M17_N"/>
    <property type="match status" value="1"/>
</dbReference>
<dbReference type="PRINTS" id="PR00481">
    <property type="entry name" value="LAMNOPPTDASE"/>
</dbReference>
<dbReference type="SUPFAM" id="SSF52949">
    <property type="entry name" value="Macro domain-like"/>
    <property type="match status" value="1"/>
</dbReference>
<dbReference type="SUPFAM" id="SSF53187">
    <property type="entry name" value="Zn-dependent exopeptidases"/>
    <property type="match status" value="1"/>
</dbReference>
<dbReference type="PROSITE" id="PS00631">
    <property type="entry name" value="CYTOSOL_AP"/>
    <property type="match status" value="1"/>
</dbReference>
<comment type="function">
    <text evidence="1">Presumably involved in the processing and regular turnover of intracellular proteins. Catalyzes the removal of unsubstituted N-terminal amino acids from various peptides.</text>
</comment>
<comment type="catalytic activity">
    <reaction evidence="1">
        <text>Release of an N-terminal amino acid, Xaa-|-Yaa-, in which Xaa is preferably Leu, but may be other amino acids including Pro although not Arg or Lys, and Yaa may be Pro. Amino acid amides and methyl esters are also readily hydrolyzed, but rates on arylamides are exceedingly low.</text>
        <dbReference type="EC" id="3.4.11.1"/>
    </reaction>
</comment>
<comment type="catalytic activity">
    <reaction evidence="1">
        <text>Release of an N-terminal amino acid, preferentially leucine, but not glutamic or aspartic acids.</text>
        <dbReference type="EC" id="3.4.11.10"/>
    </reaction>
</comment>
<comment type="cofactor">
    <cofactor evidence="1">
        <name>Mn(2+)</name>
        <dbReference type="ChEBI" id="CHEBI:29035"/>
    </cofactor>
    <text evidence="1">Binds 2 manganese ions per subunit.</text>
</comment>
<comment type="subcellular location">
    <subcellularLocation>
        <location evidence="1">Cytoplasm</location>
    </subcellularLocation>
</comment>
<comment type="similarity">
    <text evidence="1">Belongs to the peptidase M17 family.</text>
</comment>
<sequence length="503" mass="53088">MDFSIKACDWSKGSTNGFLTGKSDCIVIGVFESQTLSGAALEIDAATKGLLTRIIKAGDMDGKTGSTVFLHEVQGIGASRVLLVGLGKQDAFTQKVYGDAVRAAWRAILGTKVAQVTFTLVQAPVKERSSDWAVRAAILALRELTYKFTQMKSKPDTSTRALKRIVFSVDAADEKLAKVAVKQGVALANGMDLTKDLGNLPGNVCTPTYLGNTAKKLAKDWKLKVEVLGQKQIEALKMGSFLAVTQGSVEPPQFIVLQYQGGAAKAAPVVLVGKGITFDTGGISLKPGDSMDEMKYDMCGAGSVLGTLRAVAEMGLKLNVVGIIPTCENMPAGNATKPGDIVTSMKGLTIEVLNTDAEGRLILCDALTYAERFKPAAVIDIATLTGACIIALGHHNSGLFSKDDALAGELLDASKEASDPAWRLPLDDEYQDQLKSNFADIANIGGRPAGSVTAACFLSRFTEAYPWAHLDIAGTAWKSGAAKGATGRPVPLLAQFLIDRAAQ</sequence>
<organism>
    <name type="scientific">Paraburkholderia phymatum (strain DSM 17167 / CIP 108236 / LMG 21445 / STM815)</name>
    <name type="common">Burkholderia phymatum</name>
    <dbReference type="NCBI Taxonomy" id="391038"/>
    <lineage>
        <taxon>Bacteria</taxon>
        <taxon>Pseudomonadati</taxon>
        <taxon>Pseudomonadota</taxon>
        <taxon>Betaproteobacteria</taxon>
        <taxon>Burkholderiales</taxon>
        <taxon>Burkholderiaceae</taxon>
        <taxon>Paraburkholderia</taxon>
    </lineage>
</organism>
<gene>
    <name evidence="1" type="primary">pepA</name>
    <name type="ordered locus">Bphy_2225</name>
</gene>
<evidence type="ECO:0000255" key="1">
    <source>
        <dbReference type="HAMAP-Rule" id="MF_00181"/>
    </source>
</evidence>
<reference key="1">
    <citation type="journal article" date="2014" name="Stand. Genomic Sci.">
        <title>Complete genome sequence of Burkholderia phymatum STM815(T), a broad host range and efficient nitrogen-fixing symbiont of Mimosa species.</title>
        <authorList>
            <person name="Moulin L."/>
            <person name="Klonowska A."/>
            <person name="Caroline B."/>
            <person name="Booth K."/>
            <person name="Vriezen J.A."/>
            <person name="Melkonian R."/>
            <person name="James E.K."/>
            <person name="Young J.P."/>
            <person name="Bena G."/>
            <person name="Hauser L."/>
            <person name="Land M."/>
            <person name="Kyrpides N."/>
            <person name="Bruce D."/>
            <person name="Chain P."/>
            <person name="Copeland A."/>
            <person name="Pitluck S."/>
            <person name="Woyke T."/>
            <person name="Lizotte-Waniewski M."/>
            <person name="Bristow J."/>
            <person name="Riley M."/>
        </authorList>
    </citation>
    <scope>NUCLEOTIDE SEQUENCE [LARGE SCALE GENOMIC DNA]</scope>
    <source>
        <strain>DSM 17167 / CIP 108236 / LMG 21445 / STM815</strain>
    </source>
</reference>
<protein>
    <recommendedName>
        <fullName evidence="1">Probable cytosol aminopeptidase</fullName>
        <ecNumber evidence="1">3.4.11.1</ecNumber>
    </recommendedName>
    <alternativeName>
        <fullName evidence="1">Leucine aminopeptidase</fullName>
        <shortName evidence="1">LAP</shortName>
        <ecNumber evidence="1">3.4.11.10</ecNumber>
    </alternativeName>
    <alternativeName>
        <fullName evidence="1">Leucyl aminopeptidase</fullName>
    </alternativeName>
</protein>
<keyword id="KW-0031">Aminopeptidase</keyword>
<keyword id="KW-0963">Cytoplasm</keyword>
<keyword id="KW-0378">Hydrolase</keyword>
<keyword id="KW-0464">Manganese</keyword>
<keyword id="KW-0479">Metal-binding</keyword>
<keyword id="KW-0645">Protease</keyword>
<keyword id="KW-1185">Reference proteome</keyword>
<proteinExistence type="inferred from homology"/>
<accession>B2JET5</accession>